<gene>
    <name evidence="1" type="primary">tatA</name>
    <name type="ordered locus">Cag_1748</name>
</gene>
<keyword id="KW-0997">Cell inner membrane</keyword>
<keyword id="KW-1003">Cell membrane</keyword>
<keyword id="KW-0472">Membrane</keyword>
<keyword id="KW-0653">Protein transport</keyword>
<keyword id="KW-0811">Translocation</keyword>
<keyword id="KW-0812">Transmembrane</keyword>
<keyword id="KW-1133">Transmembrane helix</keyword>
<keyword id="KW-0813">Transport</keyword>
<accession>Q3APS6</accession>
<protein>
    <recommendedName>
        <fullName evidence="1">Sec-independent protein translocase protein TatA</fullName>
    </recommendedName>
</protein>
<sequence length="69" mass="7623">MFGLGGQELVLILLIVLLLFGAQKLPELAKGLGKGMKEFKRAQNEIEEEFNKSMDDNPKKEKATTASKS</sequence>
<comment type="function">
    <text evidence="1">Part of the twin-arginine translocation (Tat) system that transports large folded proteins containing a characteristic twin-arginine motif in their signal peptide across membranes. TatA could form the protein-conducting channel of the Tat system.</text>
</comment>
<comment type="subunit">
    <text evidence="1">Forms a complex with TatC.</text>
</comment>
<comment type="subcellular location">
    <subcellularLocation>
        <location evidence="1">Cell inner membrane</location>
        <topology evidence="1">Single-pass membrane protein</topology>
    </subcellularLocation>
</comment>
<comment type="similarity">
    <text evidence="1">Belongs to the TatA/E family.</text>
</comment>
<evidence type="ECO:0000255" key="1">
    <source>
        <dbReference type="HAMAP-Rule" id="MF_00236"/>
    </source>
</evidence>
<evidence type="ECO:0000256" key="2">
    <source>
        <dbReference type="SAM" id="MobiDB-lite"/>
    </source>
</evidence>
<proteinExistence type="inferred from homology"/>
<organism>
    <name type="scientific">Chlorobium chlorochromatii (strain CaD3)</name>
    <dbReference type="NCBI Taxonomy" id="340177"/>
    <lineage>
        <taxon>Bacteria</taxon>
        <taxon>Pseudomonadati</taxon>
        <taxon>Chlorobiota</taxon>
        <taxon>Chlorobiia</taxon>
        <taxon>Chlorobiales</taxon>
        <taxon>Chlorobiaceae</taxon>
        <taxon>Chlorobium/Pelodictyon group</taxon>
        <taxon>Chlorobium</taxon>
    </lineage>
</organism>
<name>TATA_CHLCH</name>
<feature type="chain" id="PRO_1000078302" description="Sec-independent protein translocase protein TatA">
    <location>
        <begin position="1"/>
        <end position="69"/>
    </location>
</feature>
<feature type="transmembrane region" description="Helical" evidence="1">
    <location>
        <begin position="1"/>
        <end position="21"/>
    </location>
</feature>
<feature type="region of interest" description="Disordered" evidence="2">
    <location>
        <begin position="47"/>
        <end position="69"/>
    </location>
</feature>
<feature type="compositionally biased region" description="Basic and acidic residues" evidence="2">
    <location>
        <begin position="47"/>
        <end position="63"/>
    </location>
</feature>
<reference key="1">
    <citation type="submission" date="2005-08" db="EMBL/GenBank/DDBJ databases">
        <title>Complete sequence of Chlorobium chlorochromatii CaD3.</title>
        <authorList>
            <consortium name="US DOE Joint Genome Institute"/>
            <person name="Copeland A."/>
            <person name="Lucas S."/>
            <person name="Lapidus A."/>
            <person name="Barry K."/>
            <person name="Detter J.C."/>
            <person name="Glavina T."/>
            <person name="Hammon N."/>
            <person name="Israni S."/>
            <person name="Pitluck S."/>
            <person name="Bryant D."/>
            <person name="Schmutz J."/>
            <person name="Larimer F."/>
            <person name="Land M."/>
            <person name="Kyrpides N."/>
            <person name="Ivanova N."/>
            <person name="Richardson P."/>
        </authorList>
    </citation>
    <scope>NUCLEOTIDE SEQUENCE [LARGE SCALE GENOMIC DNA]</scope>
    <source>
        <strain>CaD3</strain>
    </source>
</reference>
<dbReference type="EMBL" id="CP000108">
    <property type="protein sequence ID" value="ABB28999.1"/>
    <property type="molecule type" value="Genomic_DNA"/>
</dbReference>
<dbReference type="SMR" id="Q3APS6"/>
<dbReference type="STRING" id="340177.Cag_1748"/>
<dbReference type="KEGG" id="cch:Cag_1748"/>
<dbReference type="eggNOG" id="COG1826">
    <property type="taxonomic scope" value="Bacteria"/>
</dbReference>
<dbReference type="HOGENOM" id="CLU_086034_6_2_10"/>
<dbReference type="OrthoDB" id="9812812at2"/>
<dbReference type="GO" id="GO:0033281">
    <property type="term" value="C:TAT protein transport complex"/>
    <property type="evidence" value="ECO:0007669"/>
    <property type="project" value="UniProtKB-UniRule"/>
</dbReference>
<dbReference type="GO" id="GO:0008320">
    <property type="term" value="F:protein transmembrane transporter activity"/>
    <property type="evidence" value="ECO:0007669"/>
    <property type="project" value="UniProtKB-UniRule"/>
</dbReference>
<dbReference type="GO" id="GO:0043953">
    <property type="term" value="P:protein transport by the Tat complex"/>
    <property type="evidence" value="ECO:0007669"/>
    <property type="project" value="UniProtKB-UniRule"/>
</dbReference>
<dbReference type="Gene3D" id="1.20.5.3310">
    <property type="match status" value="1"/>
</dbReference>
<dbReference type="HAMAP" id="MF_00236">
    <property type="entry name" value="TatA_E"/>
    <property type="match status" value="1"/>
</dbReference>
<dbReference type="InterPro" id="IPR003369">
    <property type="entry name" value="TatA/B/E"/>
</dbReference>
<dbReference type="InterPro" id="IPR006312">
    <property type="entry name" value="TatA/E"/>
</dbReference>
<dbReference type="NCBIfam" id="TIGR01411">
    <property type="entry name" value="tatAE"/>
    <property type="match status" value="1"/>
</dbReference>
<dbReference type="PANTHER" id="PTHR42982">
    <property type="entry name" value="SEC-INDEPENDENT PROTEIN TRANSLOCASE PROTEIN TATA"/>
    <property type="match status" value="1"/>
</dbReference>
<dbReference type="PANTHER" id="PTHR42982:SF1">
    <property type="entry name" value="SEC-INDEPENDENT PROTEIN TRANSLOCASE PROTEIN TATA"/>
    <property type="match status" value="1"/>
</dbReference>
<dbReference type="Pfam" id="PF02416">
    <property type="entry name" value="TatA_B_E"/>
    <property type="match status" value="1"/>
</dbReference>
<dbReference type="PRINTS" id="PR01506">
    <property type="entry name" value="TATBPROTEIN"/>
</dbReference>